<feature type="chain" id="PRO_0000395709" description="Probable E3 ubiquitin-protein ligase hulA">
    <location>
        <begin position="1"/>
        <end position="808"/>
    </location>
</feature>
<feature type="domain" description="C2" evidence="3">
    <location>
        <begin position="1"/>
        <end position="112"/>
    </location>
</feature>
<feature type="domain" description="WW 1" evidence="5">
    <location>
        <begin position="223"/>
        <end position="256"/>
    </location>
</feature>
<feature type="domain" description="WW 2" evidence="5">
    <location>
        <begin position="326"/>
        <end position="359"/>
    </location>
</feature>
<feature type="domain" description="WW 3" evidence="5">
    <location>
        <begin position="386"/>
        <end position="419"/>
    </location>
</feature>
<feature type="domain" description="HECT" evidence="4">
    <location>
        <begin position="475"/>
        <end position="808"/>
    </location>
</feature>
<feature type="region of interest" description="Disordered" evidence="6">
    <location>
        <begin position="134"/>
        <end position="231"/>
    </location>
</feature>
<feature type="region of interest" description="Disordered" evidence="6">
    <location>
        <begin position="275"/>
        <end position="346"/>
    </location>
</feature>
<feature type="compositionally biased region" description="Polar residues" evidence="6">
    <location>
        <begin position="142"/>
        <end position="159"/>
    </location>
</feature>
<feature type="compositionally biased region" description="Polar residues" evidence="6">
    <location>
        <begin position="171"/>
        <end position="198"/>
    </location>
</feature>
<feature type="compositionally biased region" description="Low complexity" evidence="6">
    <location>
        <begin position="199"/>
        <end position="210"/>
    </location>
</feature>
<feature type="compositionally biased region" description="Polar residues" evidence="6">
    <location>
        <begin position="211"/>
        <end position="220"/>
    </location>
</feature>
<feature type="compositionally biased region" description="Basic and acidic residues" evidence="6">
    <location>
        <begin position="275"/>
        <end position="288"/>
    </location>
</feature>
<feature type="compositionally biased region" description="Polar residues" evidence="6">
    <location>
        <begin position="289"/>
        <end position="303"/>
    </location>
</feature>
<feature type="compositionally biased region" description="Low complexity" evidence="6">
    <location>
        <begin position="317"/>
        <end position="326"/>
    </location>
</feature>
<feature type="active site" description="Glycyl thioester intermediate" evidence="4">
    <location>
        <position position="776"/>
    </location>
</feature>
<comment type="function">
    <text evidence="2">E3 ubiquitin-protein ligase which accepts ubiquitin from an E2 ubiquitin-conjugating enzyme in the form of a thioester and then directly transfers the ubiquitin to targeted substrates. Probably involved in the regulatory network controlling carbon source utilization.</text>
</comment>
<comment type="catalytic activity">
    <reaction>
        <text>S-ubiquitinyl-[E2 ubiquitin-conjugating enzyme]-L-cysteine + [acceptor protein]-L-lysine = [E2 ubiquitin-conjugating enzyme]-L-cysteine + N(6)-ubiquitinyl-[acceptor protein]-L-lysine.</text>
        <dbReference type="EC" id="2.3.2.26"/>
    </reaction>
</comment>
<comment type="pathway">
    <text>Protein modification; protein ubiquitination.</text>
</comment>
<comment type="subunit">
    <text evidence="2">Interacts with creD.</text>
</comment>
<comment type="subcellular location">
    <subcellularLocation>
        <location evidence="1">Cytoplasm</location>
    </subcellularLocation>
</comment>
<comment type="similarity">
    <text evidence="7">Belongs to the RSP5/NEDD4 family.</text>
</comment>
<gene>
    <name type="primary">hulA</name>
    <name type="ORF">ATEG_08573</name>
</gene>
<protein>
    <recommendedName>
        <fullName>Probable E3 ubiquitin-protein ligase hulA</fullName>
        <ecNumber>2.3.2.26</ecNumber>
    </recommendedName>
    <alternativeName>
        <fullName>HECT ubiquitin ligase A</fullName>
    </alternativeName>
    <alternativeName>
        <fullName>HECT-type E3 ubiquitin transferase hulA</fullName>
    </alternativeName>
</protein>
<proteinExistence type="inferred from homology"/>
<evidence type="ECO:0000250" key="1">
    <source>
        <dbReference type="UniProtKB" id="P39940"/>
    </source>
</evidence>
<evidence type="ECO:0000250" key="2">
    <source>
        <dbReference type="UniProtKB" id="Q5BDP1"/>
    </source>
</evidence>
<evidence type="ECO:0000255" key="3">
    <source>
        <dbReference type="PROSITE-ProRule" id="PRU00041"/>
    </source>
</evidence>
<evidence type="ECO:0000255" key="4">
    <source>
        <dbReference type="PROSITE-ProRule" id="PRU00104"/>
    </source>
</evidence>
<evidence type="ECO:0000255" key="5">
    <source>
        <dbReference type="PROSITE-ProRule" id="PRU00224"/>
    </source>
</evidence>
<evidence type="ECO:0000256" key="6">
    <source>
        <dbReference type="SAM" id="MobiDB-lite"/>
    </source>
</evidence>
<evidence type="ECO:0000305" key="7"/>
<accession>Q0CCL1</accession>
<sequence length="808" mass="91724">MGSNLPAQPNLRVTIIAADGLYKRDVFRFPDPFAVATVGGEQTHTTSVIKKTLNPYWNEMFDLRVNEDSILAIQIFDQKKFKKKDQGFLGVINVRIGDVIDLQMGGDEMLTRDLKKSNDNLVVHGKLIINLSTNLSTPNTNQANGLHRSNLQSSTSSGLVPQVTAPHASPGPSQLDPTASNPSLNPQRVPSTTRPSSTVAPVNGAAAPGASRTNLSSFEDSQGRLPAGWERREDNLGRTYYVDHNTRTTTWTRPSSNYNEATQRTQREANMQLERRAHQSRMLPEDRTGASSPNLQENQQAQTPPAGGSANAVSMMATGATTAGTGELPPGWEQRTTPEGRPYFVDHNTRTTTWVDPRRQQYIRMYGQNANGNNTTIQQQPVSQLGPLPSGWEMRLTNTARVYFVDHNTKTTTWDDPRLPSSLDQGVPQYKRDFRRKLIYFRSQPALRIMSGQCHVKVRRNNIFEDSYAEIMRQSASDLKKRLMIKFDGEDGLDYGGLSREFFFLLSHEMFNPFYCLFEYSAHDNYTLQINPHSGVNPEHLNYFKFIGRVVGLAIFHRRFLDSFFIGAFYKMMLRKKVSLQDMEGVDEDLHRNLTWTLDNDIEGIIELTFAVDDEKFGERRTIDLKPGGRDIPVTNENKHEYVELVTEWKIVKRVEEQFNAFMSGFNELIPADLVNVFDERELELLIGGIADIDVDDWKKHTDYRGYQEQDEVIQNFWKIVRTWDAEQKSRLLQFTTGTSRIPVNGFKDLQGSDGPRRFTIEKSGDPAALPKSHTCFNRLDLPPYKTHETLEHKLSIAVEETLGFGQE</sequence>
<dbReference type="EC" id="2.3.2.26"/>
<dbReference type="EMBL" id="CH476606">
    <property type="protein sequence ID" value="EAU30705.1"/>
    <property type="molecule type" value="Genomic_DNA"/>
</dbReference>
<dbReference type="RefSeq" id="XP_001217159.1">
    <property type="nucleotide sequence ID" value="XM_001217158.1"/>
</dbReference>
<dbReference type="SMR" id="Q0CCL1"/>
<dbReference type="STRING" id="341663.Q0CCL1"/>
<dbReference type="EnsemblFungi" id="EAU30705">
    <property type="protein sequence ID" value="EAU30705"/>
    <property type="gene ID" value="ATEG_08573"/>
</dbReference>
<dbReference type="GeneID" id="4323535"/>
<dbReference type="VEuPathDB" id="FungiDB:ATEG_08573"/>
<dbReference type="eggNOG" id="KOG0940">
    <property type="taxonomic scope" value="Eukaryota"/>
</dbReference>
<dbReference type="HOGENOM" id="CLU_002173_0_0_1"/>
<dbReference type="OMA" id="WKRPTLD"/>
<dbReference type="OrthoDB" id="8068875at2759"/>
<dbReference type="UniPathway" id="UPA00143"/>
<dbReference type="Proteomes" id="UP000007963">
    <property type="component" value="Unassembled WGS sequence"/>
</dbReference>
<dbReference type="GO" id="GO:0005934">
    <property type="term" value="C:cellular bud tip"/>
    <property type="evidence" value="ECO:0007669"/>
    <property type="project" value="EnsemblFungi"/>
</dbReference>
<dbReference type="GO" id="GO:0022626">
    <property type="term" value="C:cytosolic ribosome"/>
    <property type="evidence" value="ECO:0007669"/>
    <property type="project" value="EnsemblFungi"/>
</dbReference>
<dbReference type="GO" id="GO:0010008">
    <property type="term" value="C:endosome membrane"/>
    <property type="evidence" value="ECO:0007669"/>
    <property type="project" value="EnsemblFungi"/>
</dbReference>
<dbReference type="GO" id="GO:0005794">
    <property type="term" value="C:Golgi apparatus"/>
    <property type="evidence" value="ECO:0007669"/>
    <property type="project" value="EnsemblFungi"/>
</dbReference>
<dbReference type="GO" id="GO:0005634">
    <property type="term" value="C:nucleus"/>
    <property type="evidence" value="ECO:0007669"/>
    <property type="project" value="EnsemblFungi"/>
</dbReference>
<dbReference type="GO" id="GO:1990306">
    <property type="term" value="C:RSP5-BUL ubiquitin ligase complex"/>
    <property type="evidence" value="ECO:0007669"/>
    <property type="project" value="EnsemblFungi"/>
</dbReference>
<dbReference type="GO" id="GO:0000151">
    <property type="term" value="C:ubiquitin ligase complex"/>
    <property type="evidence" value="ECO:0007669"/>
    <property type="project" value="EnsemblFungi"/>
</dbReference>
<dbReference type="GO" id="GO:0035091">
    <property type="term" value="F:phosphatidylinositol binding"/>
    <property type="evidence" value="ECO:0007669"/>
    <property type="project" value="EnsemblFungi"/>
</dbReference>
<dbReference type="GO" id="GO:0043130">
    <property type="term" value="F:ubiquitin binding"/>
    <property type="evidence" value="ECO:0007669"/>
    <property type="project" value="EnsemblFungi"/>
</dbReference>
<dbReference type="GO" id="GO:0004842">
    <property type="term" value="F:ubiquitin-protein transferase activity"/>
    <property type="evidence" value="ECO:0000250"/>
    <property type="project" value="UniProtKB"/>
</dbReference>
<dbReference type="GO" id="GO:0034450">
    <property type="term" value="F:ubiquitin-ubiquitin ligase activity"/>
    <property type="evidence" value="ECO:0007669"/>
    <property type="project" value="EnsemblFungi"/>
</dbReference>
<dbReference type="GO" id="GO:0034605">
    <property type="term" value="P:cellular response to heat"/>
    <property type="evidence" value="ECO:0007669"/>
    <property type="project" value="EnsemblFungi"/>
</dbReference>
<dbReference type="GO" id="GO:1903577">
    <property type="term" value="P:cellular response to L-arginine"/>
    <property type="evidence" value="ECO:0007669"/>
    <property type="project" value="EnsemblFungi"/>
</dbReference>
<dbReference type="GO" id="GO:0006325">
    <property type="term" value="P:chromatin organization"/>
    <property type="evidence" value="ECO:0007669"/>
    <property type="project" value="EnsemblFungi"/>
</dbReference>
<dbReference type="GO" id="GO:0010994">
    <property type="term" value="P:free ubiquitin chain polymerization"/>
    <property type="evidence" value="ECO:0007669"/>
    <property type="project" value="EnsemblFungi"/>
</dbReference>
<dbReference type="GO" id="GO:0072671">
    <property type="term" value="P:mitochondria-associated ubiquitin-dependent protein catabolic process"/>
    <property type="evidence" value="ECO:0007669"/>
    <property type="project" value="EnsemblFungi"/>
</dbReference>
<dbReference type="GO" id="GO:0007005">
    <property type="term" value="P:mitochondrion organization"/>
    <property type="evidence" value="ECO:0007669"/>
    <property type="project" value="EnsemblFungi"/>
</dbReference>
<dbReference type="GO" id="GO:0070651">
    <property type="term" value="P:nonfunctional rRNA decay"/>
    <property type="evidence" value="ECO:0007669"/>
    <property type="project" value="EnsemblFungi"/>
</dbReference>
<dbReference type="GO" id="GO:0016973">
    <property type="term" value="P:poly(A)+ mRNA export from nucleus"/>
    <property type="evidence" value="ECO:0007669"/>
    <property type="project" value="EnsemblFungi"/>
</dbReference>
<dbReference type="GO" id="GO:0045723">
    <property type="term" value="P:positive regulation of fatty acid biosynthetic process"/>
    <property type="evidence" value="ECO:0007669"/>
    <property type="project" value="EnsemblFungi"/>
</dbReference>
<dbReference type="GO" id="GO:0032436">
    <property type="term" value="P:positive regulation of proteasomal ubiquitin-dependent protein catabolic process"/>
    <property type="evidence" value="ECO:0007669"/>
    <property type="project" value="EnsemblFungi"/>
</dbReference>
<dbReference type="GO" id="GO:0048260">
    <property type="term" value="P:positive regulation of receptor-mediated endocytosis"/>
    <property type="evidence" value="ECO:0007669"/>
    <property type="project" value="EnsemblFungi"/>
</dbReference>
<dbReference type="GO" id="GO:0045944">
    <property type="term" value="P:positive regulation of transcription by RNA polymerase II"/>
    <property type="evidence" value="ECO:0007669"/>
    <property type="project" value="EnsemblFungi"/>
</dbReference>
<dbReference type="GO" id="GO:0070534">
    <property type="term" value="P:protein K63-linked ubiquitination"/>
    <property type="evidence" value="ECO:0007669"/>
    <property type="project" value="EnsemblFungi"/>
</dbReference>
<dbReference type="GO" id="GO:0006515">
    <property type="term" value="P:protein quality control for misfolded or incompletely synthesized proteins"/>
    <property type="evidence" value="ECO:0007669"/>
    <property type="project" value="EnsemblFungi"/>
</dbReference>
<dbReference type="GO" id="GO:0043328">
    <property type="term" value="P:protein transport to vacuole involved in ubiquitin-dependent protein catabolic process via the multivesicular body sorting pathway"/>
    <property type="evidence" value="ECO:0000250"/>
    <property type="project" value="UniProtKB"/>
</dbReference>
<dbReference type="GO" id="GO:0016567">
    <property type="term" value="P:protein ubiquitination"/>
    <property type="evidence" value="ECO:0000250"/>
    <property type="project" value="UniProtKB"/>
</dbReference>
<dbReference type="GO" id="GO:0032956">
    <property type="term" value="P:regulation of actin cytoskeleton organization"/>
    <property type="evidence" value="ECO:0007669"/>
    <property type="project" value="EnsemblFungi"/>
</dbReference>
<dbReference type="GO" id="GO:0010794">
    <property type="term" value="P:regulation of dolichol biosynthetic process"/>
    <property type="evidence" value="ECO:0007669"/>
    <property type="project" value="EnsemblFungi"/>
</dbReference>
<dbReference type="GO" id="GO:0032443">
    <property type="term" value="P:regulation of ergosterol biosynthetic process"/>
    <property type="evidence" value="ECO:0007669"/>
    <property type="project" value="EnsemblFungi"/>
</dbReference>
<dbReference type="GO" id="GO:0010793">
    <property type="term" value="P:regulation of mRNA export from nucleus"/>
    <property type="evidence" value="ECO:0007669"/>
    <property type="project" value="EnsemblFungi"/>
</dbReference>
<dbReference type="GO" id="GO:0006808">
    <property type="term" value="P:regulation of nitrogen utilization"/>
    <property type="evidence" value="ECO:0007669"/>
    <property type="project" value="EnsemblFungi"/>
</dbReference>
<dbReference type="GO" id="GO:0019220">
    <property type="term" value="P:regulation of phosphate metabolic process"/>
    <property type="evidence" value="ECO:0007669"/>
    <property type="project" value="EnsemblFungi"/>
</dbReference>
<dbReference type="GO" id="GO:0032880">
    <property type="term" value="P:regulation of protein localization"/>
    <property type="evidence" value="ECO:0007669"/>
    <property type="project" value="EnsemblFungi"/>
</dbReference>
<dbReference type="GO" id="GO:2000203">
    <property type="term" value="P:regulation of ribosomal large subunit export from nucleus"/>
    <property type="evidence" value="ECO:0007669"/>
    <property type="project" value="EnsemblFungi"/>
</dbReference>
<dbReference type="GO" id="GO:2000232">
    <property type="term" value="P:regulation of rRNA processing"/>
    <property type="evidence" value="ECO:0007669"/>
    <property type="project" value="EnsemblFungi"/>
</dbReference>
<dbReference type="GO" id="GO:2000238">
    <property type="term" value="P:regulation of tRNA export from nucleus"/>
    <property type="evidence" value="ECO:0007669"/>
    <property type="project" value="EnsemblFungi"/>
</dbReference>
<dbReference type="GO" id="GO:2000235">
    <property type="term" value="P:regulation of tRNA processing"/>
    <property type="evidence" value="ECO:0007669"/>
    <property type="project" value="EnsemblFungi"/>
</dbReference>
<dbReference type="GO" id="GO:0010795">
    <property type="term" value="P:regulation of ubiquinone biosynthetic process"/>
    <property type="evidence" value="ECO:0007669"/>
    <property type="project" value="EnsemblFungi"/>
</dbReference>
<dbReference type="GO" id="GO:0034517">
    <property type="term" value="P:ribophagy"/>
    <property type="evidence" value="ECO:0007669"/>
    <property type="project" value="EnsemblFungi"/>
</dbReference>
<dbReference type="GO" id="GO:0070086">
    <property type="term" value="P:ubiquitin-dependent endocytosis"/>
    <property type="evidence" value="ECO:0007669"/>
    <property type="project" value="EnsemblFungi"/>
</dbReference>
<dbReference type="CDD" id="cd08382">
    <property type="entry name" value="C2_Smurf-like"/>
    <property type="match status" value="1"/>
</dbReference>
<dbReference type="CDD" id="cd00078">
    <property type="entry name" value="HECTc"/>
    <property type="match status" value="1"/>
</dbReference>
<dbReference type="CDD" id="cd00201">
    <property type="entry name" value="WW"/>
    <property type="match status" value="3"/>
</dbReference>
<dbReference type="FunFam" id="2.20.70.10:FF:000011">
    <property type="entry name" value="E3 ubiquitin-protein ligase"/>
    <property type="match status" value="1"/>
</dbReference>
<dbReference type="FunFam" id="2.20.70.10:FF:000017">
    <property type="entry name" value="E3 ubiquitin-protein ligase"/>
    <property type="match status" value="1"/>
</dbReference>
<dbReference type="FunFam" id="2.20.70.10:FF:000053">
    <property type="entry name" value="E3 ubiquitin-protein ligase"/>
    <property type="match status" value="1"/>
</dbReference>
<dbReference type="FunFam" id="2.60.40.150:FF:000074">
    <property type="entry name" value="E3 ubiquitin-protein ligase"/>
    <property type="match status" value="1"/>
</dbReference>
<dbReference type="FunFam" id="3.90.1750.10:FF:000005">
    <property type="entry name" value="E3 ubiquitin-protein ligase"/>
    <property type="match status" value="1"/>
</dbReference>
<dbReference type="FunFam" id="3.30.2160.10:FF:000001">
    <property type="entry name" value="E3 ubiquitin-protein ligase NEDD4-like"/>
    <property type="match status" value="1"/>
</dbReference>
<dbReference type="FunFam" id="3.30.2410.10:FF:000001">
    <property type="entry name" value="E3 ubiquitin-protein ligase NEDD4-like"/>
    <property type="match status" value="1"/>
</dbReference>
<dbReference type="Gene3D" id="2.20.70.10">
    <property type="match status" value="2"/>
</dbReference>
<dbReference type="Gene3D" id="2.60.40.150">
    <property type="entry name" value="C2 domain"/>
    <property type="match status" value="1"/>
</dbReference>
<dbReference type="Gene3D" id="3.30.2160.10">
    <property type="entry name" value="Hect, E3 ligase catalytic domain"/>
    <property type="match status" value="1"/>
</dbReference>
<dbReference type="Gene3D" id="3.30.2410.10">
    <property type="entry name" value="Hect, E3 ligase catalytic domain"/>
    <property type="match status" value="1"/>
</dbReference>
<dbReference type="Gene3D" id="3.90.1750.10">
    <property type="entry name" value="Hect, E3 ligase catalytic domains"/>
    <property type="match status" value="1"/>
</dbReference>
<dbReference type="InterPro" id="IPR000008">
    <property type="entry name" value="C2_dom"/>
</dbReference>
<dbReference type="InterPro" id="IPR035892">
    <property type="entry name" value="C2_domain_sf"/>
</dbReference>
<dbReference type="InterPro" id="IPR024928">
    <property type="entry name" value="E3_ub_ligase_SMURF1"/>
</dbReference>
<dbReference type="InterPro" id="IPR050409">
    <property type="entry name" value="E3_ubiq-protein_ligase"/>
</dbReference>
<dbReference type="InterPro" id="IPR000569">
    <property type="entry name" value="HECT_dom"/>
</dbReference>
<dbReference type="InterPro" id="IPR035983">
    <property type="entry name" value="Hect_E3_ubiquitin_ligase"/>
</dbReference>
<dbReference type="InterPro" id="IPR001202">
    <property type="entry name" value="WW_dom"/>
</dbReference>
<dbReference type="InterPro" id="IPR036020">
    <property type="entry name" value="WW_dom_sf"/>
</dbReference>
<dbReference type="PANTHER" id="PTHR11254:SF440">
    <property type="entry name" value="E3 UBIQUITIN-PROTEIN LIGASE NEDD-4"/>
    <property type="match status" value="1"/>
</dbReference>
<dbReference type="PANTHER" id="PTHR11254">
    <property type="entry name" value="HECT DOMAIN UBIQUITIN-PROTEIN LIGASE"/>
    <property type="match status" value="1"/>
</dbReference>
<dbReference type="Pfam" id="PF00168">
    <property type="entry name" value="C2"/>
    <property type="match status" value="1"/>
</dbReference>
<dbReference type="Pfam" id="PF00632">
    <property type="entry name" value="HECT"/>
    <property type="match status" value="1"/>
</dbReference>
<dbReference type="Pfam" id="PF00397">
    <property type="entry name" value="WW"/>
    <property type="match status" value="3"/>
</dbReference>
<dbReference type="PIRSF" id="PIRSF001569">
    <property type="entry name" value="E3_ub_ligase_SMURF1"/>
    <property type="match status" value="1"/>
</dbReference>
<dbReference type="SMART" id="SM00239">
    <property type="entry name" value="C2"/>
    <property type="match status" value="1"/>
</dbReference>
<dbReference type="SMART" id="SM00119">
    <property type="entry name" value="HECTc"/>
    <property type="match status" value="1"/>
</dbReference>
<dbReference type="SMART" id="SM00456">
    <property type="entry name" value="WW"/>
    <property type="match status" value="3"/>
</dbReference>
<dbReference type="SUPFAM" id="SSF49562">
    <property type="entry name" value="C2 domain (Calcium/lipid-binding domain, CaLB)"/>
    <property type="match status" value="1"/>
</dbReference>
<dbReference type="SUPFAM" id="SSF56204">
    <property type="entry name" value="Hect, E3 ligase catalytic domain"/>
    <property type="match status" value="1"/>
</dbReference>
<dbReference type="SUPFAM" id="SSF51045">
    <property type="entry name" value="WW domain"/>
    <property type="match status" value="3"/>
</dbReference>
<dbReference type="PROSITE" id="PS50004">
    <property type="entry name" value="C2"/>
    <property type="match status" value="1"/>
</dbReference>
<dbReference type="PROSITE" id="PS50237">
    <property type="entry name" value="HECT"/>
    <property type="match status" value="1"/>
</dbReference>
<dbReference type="PROSITE" id="PS01159">
    <property type="entry name" value="WW_DOMAIN_1"/>
    <property type="match status" value="3"/>
</dbReference>
<dbReference type="PROSITE" id="PS50020">
    <property type="entry name" value="WW_DOMAIN_2"/>
    <property type="match status" value="3"/>
</dbReference>
<reference key="1">
    <citation type="submission" date="2005-09" db="EMBL/GenBank/DDBJ databases">
        <title>Annotation of the Aspergillus terreus NIH2624 genome.</title>
        <authorList>
            <person name="Birren B.W."/>
            <person name="Lander E.S."/>
            <person name="Galagan J.E."/>
            <person name="Nusbaum C."/>
            <person name="Devon K."/>
            <person name="Henn M."/>
            <person name="Ma L.-J."/>
            <person name="Jaffe D.B."/>
            <person name="Butler J."/>
            <person name="Alvarez P."/>
            <person name="Gnerre S."/>
            <person name="Grabherr M."/>
            <person name="Kleber M."/>
            <person name="Mauceli E.W."/>
            <person name="Brockman W."/>
            <person name="Rounsley S."/>
            <person name="Young S.K."/>
            <person name="LaButti K."/>
            <person name="Pushparaj V."/>
            <person name="DeCaprio D."/>
            <person name="Crawford M."/>
            <person name="Koehrsen M."/>
            <person name="Engels R."/>
            <person name="Montgomery P."/>
            <person name="Pearson M."/>
            <person name="Howarth C."/>
            <person name="Larson L."/>
            <person name="Luoma S."/>
            <person name="White J."/>
            <person name="Alvarado L."/>
            <person name="Kodira C.D."/>
            <person name="Zeng Q."/>
            <person name="Oleary S."/>
            <person name="Yandava C."/>
            <person name="Denning D.W."/>
            <person name="Nierman W.C."/>
            <person name="Milne T."/>
            <person name="Madden K."/>
        </authorList>
    </citation>
    <scope>NUCLEOTIDE SEQUENCE [LARGE SCALE GENOMIC DNA]</scope>
    <source>
        <strain>NIH 2624 / FGSC A1156</strain>
    </source>
</reference>
<keyword id="KW-0963">Cytoplasm</keyword>
<keyword id="KW-1185">Reference proteome</keyword>
<keyword id="KW-0677">Repeat</keyword>
<keyword id="KW-0808">Transferase</keyword>
<keyword id="KW-0833">Ubl conjugation pathway</keyword>
<organism>
    <name type="scientific">Aspergillus terreus (strain NIH 2624 / FGSC A1156)</name>
    <dbReference type="NCBI Taxonomy" id="341663"/>
    <lineage>
        <taxon>Eukaryota</taxon>
        <taxon>Fungi</taxon>
        <taxon>Dikarya</taxon>
        <taxon>Ascomycota</taxon>
        <taxon>Pezizomycotina</taxon>
        <taxon>Eurotiomycetes</taxon>
        <taxon>Eurotiomycetidae</taxon>
        <taxon>Eurotiales</taxon>
        <taxon>Aspergillaceae</taxon>
        <taxon>Aspergillus</taxon>
        <taxon>Aspergillus subgen. Circumdati</taxon>
    </lineage>
</organism>
<name>RSP5_ASPTN</name>